<organism>
    <name type="scientific">Rhodopseudomonas palustris (strain ATCC BAA-98 / CGA009)</name>
    <dbReference type="NCBI Taxonomy" id="258594"/>
    <lineage>
        <taxon>Bacteria</taxon>
        <taxon>Pseudomonadati</taxon>
        <taxon>Pseudomonadota</taxon>
        <taxon>Alphaproteobacteria</taxon>
        <taxon>Hyphomicrobiales</taxon>
        <taxon>Nitrobacteraceae</taxon>
        <taxon>Rhodopseudomonas</taxon>
    </lineage>
</organism>
<accession>Q6NC62</accession>
<evidence type="ECO:0000255" key="1">
    <source>
        <dbReference type="HAMAP-Rule" id="MF_01374"/>
    </source>
</evidence>
<protein>
    <recommendedName>
        <fullName evidence="1">Hydroxyacylglutathione hydrolase</fullName>
        <ecNumber evidence="1">3.1.2.6</ecNumber>
    </recommendedName>
    <alternativeName>
        <fullName evidence="1">Glyoxalase II</fullName>
        <shortName evidence="1">Glx II</shortName>
    </alternativeName>
</protein>
<comment type="function">
    <text evidence="1">Thiolesterase that catalyzes the hydrolysis of S-D-lactoyl-glutathione to form glutathione and D-lactic acid.</text>
</comment>
<comment type="catalytic activity">
    <reaction evidence="1">
        <text>an S-(2-hydroxyacyl)glutathione + H2O = a 2-hydroxy carboxylate + glutathione + H(+)</text>
        <dbReference type="Rhea" id="RHEA:21864"/>
        <dbReference type="ChEBI" id="CHEBI:15377"/>
        <dbReference type="ChEBI" id="CHEBI:15378"/>
        <dbReference type="ChEBI" id="CHEBI:57925"/>
        <dbReference type="ChEBI" id="CHEBI:58896"/>
        <dbReference type="ChEBI" id="CHEBI:71261"/>
        <dbReference type="EC" id="3.1.2.6"/>
    </reaction>
</comment>
<comment type="cofactor">
    <cofactor evidence="1">
        <name>Zn(2+)</name>
        <dbReference type="ChEBI" id="CHEBI:29105"/>
    </cofactor>
    <text evidence="1">Binds 2 Zn(2+) ions per subunit.</text>
</comment>
<comment type="pathway">
    <text evidence="1">Secondary metabolite metabolism; methylglyoxal degradation; (R)-lactate from methylglyoxal: step 2/2.</text>
</comment>
<comment type="subunit">
    <text evidence="1">Monomer.</text>
</comment>
<comment type="similarity">
    <text evidence="1">Belongs to the metallo-beta-lactamase superfamily. Glyoxalase II family.</text>
</comment>
<reference key="1">
    <citation type="journal article" date="2004" name="Nat. Biotechnol.">
        <title>Complete genome sequence of the metabolically versatile photosynthetic bacterium Rhodopseudomonas palustris.</title>
        <authorList>
            <person name="Larimer F.W."/>
            <person name="Chain P."/>
            <person name="Hauser L."/>
            <person name="Lamerdin J.E."/>
            <person name="Malfatti S."/>
            <person name="Do L."/>
            <person name="Land M.L."/>
            <person name="Pelletier D.A."/>
            <person name="Beatty J.T."/>
            <person name="Lang A.S."/>
            <person name="Tabita F.R."/>
            <person name="Gibson J.L."/>
            <person name="Hanson T.E."/>
            <person name="Bobst C."/>
            <person name="Torres y Torres J.L."/>
            <person name="Peres C."/>
            <person name="Harrison F.H."/>
            <person name="Gibson J."/>
            <person name="Harwood C.S."/>
        </authorList>
    </citation>
    <scope>NUCLEOTIDE SEQUENCE [LARGE SCALE GENOMIC DNA]</scope>
    <source>
        <strain>ATCC BAA-98 / CGA009</strain>
    </source>
</reference>
<name>GLO2_RHOPA</name>
<keyword id="KW-0378">Hydrolase</keyword>
<keyword id="KW-0479">Metal-binding</keyword>
<keyword id="KW-0862">Zinc</keyword>
<sequence>MPADIRIVPCLTDNFGYLVHDPATGATASIDAPEAAPLIAALDKEGWKLTDILVTHHHGDHVGGIAELKKKYQCRVHAPHDANAKIADADVRLQEGDVVRVGDLTARVLETPGHTLDHLSYVFDDDRALFAADTLFSIGCGRVFEGTYPMMWESLLKLRALPDDFKLYCGHEYTASNVKFALGIEPDNAALQARAKQVESLRAEGKPTIPVTLGEEKQANVFLRADVPSVAAAVGMPGAPAAEVFGEIRERKNNG</sequence>
<proteinExistence type="inferred from homology"/>
<feature type="chain" id="PRO_0000309693" description="Hydroxyacylglutathione hydrolase">
    <location>
        <begin position="1"/>
        <end position="255"/>
    </location>
</feature>
<feature type="binding site" evidence="1">
    <location>
        <position position="56"/>
    </location>
    <ligand>
        <name>Zn(2+)</name>
        <dbReference type="ChEBI" id="CHEBI:29105"/>
        <label>1</label>
    </ligand>
</feature>
<feature type="binding site" evidence="1">
    <location>
        <position position="58"/>
    </location>
    <ligand>
        <name>Zn(2+)</name>
        <dbReference type="ChEBI" id="CHEBI:29105"/>
        <label>1</label>
    </ligand>
</feature>
<feature type="binding site" evidence="1">
    <location>
        <position position="60"/>
    </location>
    <ligand>
        <name>Zn(2+)</name>
        <dbReference type="ChEBI" id="CHEBI:29105"/>
        <label>2</label>
    </ligand>
</feature>
<feature type="binding site" evidence="1">
    <location>
        <position position="61"/>
    </location>
    <ligand>
        <name>Zn(2+)</name>
        <dbReference type="ChEBI" id="CHEBI:29105"/>
        <label>2</label>
    </ligand>
</feature>
<feature type="binding site" evidence="1">
    <location>
        <position position="114"/>
    </location>
    <ligand>
        <name>Zn(2+)</name>
        <dbReference type="ChEBI" id="CHEBI:29105"/>
        <label>1</label>
    </ligand>
</feature>
<feature type="binding site" evidence="1">
    <location>
        <position position="133"/>
    </location>
    <ligand>
        <name>Zn(2+)</name>
        <dbReference type="ChEBI" id="CHEBI:29105"/>
        <label>1</label>
    </ligand>
</feature>
<feature type="binding site" evidence="1">
    <location>
        <position position="133"/>
    </location>
    <ligand>
        <name>Zn(2+)</name>
        <dbReference type="ChEBI" id="CHEBI:29105"/>
        <label>2</label>
    </ligand>
</feature>
<feature type="binding site" evidence="1">
    <location>
        <position position="171"/>
    </location>
    <ligand>
        <name>Zn(2+)</name>
        <dbReference type="ChEBI" id="CHEBI:29105"/>
        <label>2</label>
    </ligand>
</feature>
<gene>
    <name evidence="1" type="primary">gloB</name>
    <name type="ordered locus">RPA0610</name>
</gene>
<dbReference type="EC" id="3.1.2.6" evidence="1"/>
<dbReference type="EMBL" id="BX572594">
    <property type="protein sequence ID" value="CAE26054.1"/>
    <property type="molecule type" value="Genomic_DNA"/>
</dbReference>
<dbReference type="RefSeq" id="WP_011156178.1">
    <property type="nucleotide sequence ID" value="NZ_CP116810.1"/>
</dbReference>
<dbReference type="SMR" id="Q6NC62"/>
<dbReference type="STRING" id="258594.RPA0610"/>
<dbReference type="GeneID" id="66891630"/>
<dbReference type="eggNOG" id="COG0491">
    <property type="taxonomic scope" value="Bacteria"/>
</dbReference>
<dbReference type="HOGENOM" id="CLU_030571_4_1_5"/>
<dbReference type="PhylomeDB" id="Q6NC62"/>
<dbReference type="UniPathway" id="UPA00619">
    <property type="reaction ID" value="UER00676"/>
</dbReference>
<dbReference type="GO" id="GO:0004416">
    <property type="term" value="F:hydroxyacylglutathione hydrolase activity"/>
    <property type="evidence" value="ECO:0007669"/>
    <property type="project" value="UniProtKB-UniRule"/>
</dbReference>
<dbReference type="GO" id="GO:0046872">
    <property type="term" value="F:metal ion binding"/>
    <property type="evidence" value="ECO:0007669"/>
    <property type="project" value="UniProtKB-KW"/>
</dbReference>
<dbReference type="GO" id="GO:0019243">
    <property type="term" value="P:methylglyoxal catabolic process to D-lactate via S-lactoyl-glutathione"/>
    <property type="evidence" value="ECO:0007669"/>
    <property type="project" value="InterPro"/>
</dbReference>
<dbReference type="CDD" id="cd07723">
    <property type="entry name" value="hydroxyacylglutathione_hydrolase_MBL-fold"/>
    <property type="match status" value="1"/>
</dbReference>
<dbReference type="Gene3D" id="3.60.15.10">
    <property type="entry name" value="Ribonuclease Z/Hydroxyacylglutathione hydrolase-like"/>
    <property type="match status" value="1"/>
</dbReference>
<dbReference type="HAMAP" id="MF_01374">
    <property type="entry name" value="Glyoxalase_2"/>
    <property type="match status" value="1"/>
</dbReference>
<dbReference type="InterPro" id="IPR035680">
    <property type="entry name" value="Clx_II_MBL"/>
</dbReference>
<dbReference type="InterPro" id="IPR050110">
    <property type="entry name" value="Glyoxalase_II_hydrolase"/>
</dbReference>
<dbReference type="InterPro" id="IPR032282">
    <property type="entry name" value="HAGH_C"/>
</dbReference>
<dbReference type="InterPro" id="IPR017782">
    <property type="entry name" value="Hydroxyacylglutathione_Hdrlase"/>
</dbReference>
<dbReference type="InterPro" id="IPR001279">
    <property type="entry name" value="Metallo-B-lactamas"/>
</dbReference>
<dbReference type="InterPro" id="IPR036866">
    <property type="entry name" value="RibonucZ/Hydroxyglut_hydro"/>
</dbReference>
<dbReference type="NCBIfam" id="TIGR03413">
    <property type="entry name" value="GSH_gloB"/>
    <property type="match status" value="1"/>
</dbReference>
<dbReference type="PANTHER" id="PTHR43705">
    <property type="entry name" value="HYDROXYACYLGLUTATHIONE HYDROLASE"/>
    <property type="match status" value="1"/>
</dbReference>
<dbReference type="PANTHER" id="PTHR43705:SF1">
    <property type="entry name" value="HYDROXYACYLGLUTATHIONE HYDROLASE GLOB"/>
    <property type="match status" value="1"/>
</dbReference>
<dbReference type="Pfam" id="PF16123">
    <property type="entry name" value="HAGH_C"/>
    <property type="match status" value="1"/>
</dbReference>
<dbReference type="Pfam" id="PF00753">
    <property type="entry name" value="Lactamase_B"/>
    <property type="match status" value="1"/>
</dbReference>
<dbReference type="PIRSF" id="PIRSF005457">
    <property type="entry name" value="Glx"/>
    <property type="match status" value="1"/>
</dbReference>
<dbReference type="SMART" id="SM00849">
    <property type="entry name" value="Lactamase_B"/>
    <property type="match status" value="1"/>
</dbReference>
<dbReference type="SUPFAM" id="SSF56281">
    <property type="entry name" value="Metallo-hydrolase/oxidoreductase"/>
    <property type="match status" value="1"/>
</dbReference>